<sequence>MQDVKTYLSTAPVLATLWFGFLAGLLIEINRFFPDALVLPFF</sequence>
<name>PSAJ_MARPO</name>
<geneLocation type="chloroplast"/>
<protein>
    <recommendedName>
        <fullName evidence="1">Photosystem I reaction center subunit IX</fullName>
    </recommendedName>
    <alternativeName>
        <fullName evidence="1">PSI-J</fullName>
    </alternativeName>
</protein>
<accession>P12191</accession>
<evidence type="ECO:0000255" key="1">
    <source>
        <dbReference type="HAMAP-Rule" id="MF_00522"/>
    </source>
</evidence>
<dbReference type="EMBL" id="X04465">
    <property type="protein sequence ID" value="CAA28105.1"/>
    <property type="molecule type" value="Genomic_DNA"/>
</dbReference>
<dbReference type="PIR" id="S01542">
    <property type="entry name" value="A05055"/>
</dbReference>
<dbReference type="RefSeq" id="NP_039319.1">
    <property type="nucleotide sequence ID" value="NC_001319.1"/>
</dbReference>
<dbReference type="RefSeq" id="YP_009646833.1">
    <property type="nucleotide sequence ID" value="NC_042505.1"/>
</dbReference>
<dbReference type="SMR" id="P12191"/>
<dbReference type="GeneID" id="2702605"/>
<dbReference type="GeneID" id="40386782"/>
<dbReference type="GO" id="GO:0009535">
    <property type="term" value="C:chloroplast thylakoid membrane"/>
    <property type="evidence" value="ECO:0007669"/>
    <property type="project" value="UniProtKB-SubCell"/>
</dbReference>
<dbReference type="GO" id="GO:0009522">
    <property type="term" value="C:photosystem I"/>
    <property type="evidence" value="ECO:0007669"/>
    <property type="project" value="UniProtKB-KW"/>
</dbReference>
<dbReference type="GO" id="GO:0015979">
    <property type="term" value="P:photosynthesis"/>
    <property type="evidence" value="ECO:0007669"/>
    <property type="project" value="UniProtKB-UniRule"/>
</dbReference>
<dbReference type="Gene3D" id="1.20.5.510">
    <property type="entry name" value="Single helix bin"/>
    <property type="match status" value="1"/>
</dbReference>
<dbReference type="HAMAP" id="MF_00522">
    <property type="entry name" value="PSI_PsaJ"/>
    <property type="match status" value="1"/>
</dbReference>
<dbReference type="InterPro" id="IPR002615">
    <property type="entry name" value="PSI_PsaJ"/>
</dbReference>
<dbReference type="InterPro" id="IPR036062">
    <property type="entry name" value="PSI_PsaJ_sf"/>
</dbReference>
<dbReference type="PANTHER" id="PTHR36082">
    <property type="match status" value="1"/>
</dbReference>
<dbReference type="PANTHER" id="PTHR36082:SF2">
    <property type="entry name" value="PHOTOSYSTEM I REACTION CENTER SUBUNIT IX"/>
    <property type="match status" value="1"/>
</dbReference>
<dbReference type="Pfam" id="PF01701">
    <property type="entry name" value="PSI_PsaJ"/>
    <property type="match status" value="1"/>
</dbReference>
<dbReference type="SUPFAM" id="SSF81544">
    <property type="entry name" value="Subunit IX of photosystem I reaction centre, PsaJ"/>
    <property type="match status" value="1"/>
</dbReference>
<keyword id="KW-0150">Chloroplast</keyword>
<keyword id="KW-0472">Membrane</keyword>
<keyword id="KW-0602">Photosynthesis</keyword>
<keyword id="KW-0603">Photosystem I</keyword>
<keyword id="KW-0934">Plastid</keyword>
<keyword id="KW-0793">Thylakoid</keyword>
<keyword id="KW-0812">Transmembrane</keyword>
<keyword id="KW-1133">Transmembrane helix</keyword>
<gene>
    <name evidence="1" type="primary">psaJ</name>
</gene>
<organism>
    <name type="scientific">Marchantia polymorpha</name>
    <name type="common">Common liverwort</name>
    <name type="synonym">Marchantia aquatica</name>
    <dbReference type="NCBI Taxonomy" id="3197"/>
    <lineage>
        <taxon>Eukaryota</taxon>
        <taxon>Viridiplantae</taxon>
        <taxon>Streptophyta</taxon>
        <taxon>Embryophyta</taxon>
        <taxon>Marchantiophyta</taxon>
        <taxon>Marchantiopsida</taxon>
        <taxon>Marchantiidae</taxon>
        <taxon>Marchantiales</taxon>
        <taxon>Marchantiaceae</taxon>
        <taxon>Marchantia</taxon>
    </lineage>
</organism>
<reference key="1">
    <citation type="journal article" date="1988" name="J. Mol. Biol.">
        <title>Structure and organization of Marchantia polymorpha chloroplast genome. III. Gene organization of the large single copy region from rbcL to trnI(CAU).</title>
        <authorList>
            <person name="Fukuzawa H."/>
            <person name="Kohchi T."/>
            <person name="Sano T."/>
            <person name="Shirai H."/>
            <person name="Umesono K."/>
            <person name="Inokuchi H."/>
            <person name="Ozeki H."/>
            <person name="Ohyama K."/>
        </authorList>
    </citation>
    <scope>NUCLEOTIDE SEQUENCE [GENOMIC DNA]</scope>
</reference>
<reference key="2">
    <citation type="journal article" date="1986" name="Nature">
        <title>Chloroplast gene organization deduced from complete sequence of liverwort Marchantia polymorpha chloroplast DNA.</title>
        <authorList>
            <person name="Ohyama K."/>
            <person name="Fukuzawa H."/>
            <person name="Kohchi T."/>
            <person name="Shirai H."/>
            <person name="Sano T."/>
            <person name="Sano S."/>
            <person name="Umesono K."/>
            <person name="Shiki Y."/>
            <person name="Takeuchi M."/>
            <person name="Chang Z."/>
            <person name="Aota S."/>
            <person name="Inokuchi H."/>
            <person name="Ozeki H."/>
        </authorList>
    </citation>
    <scope>NUCLEOTIDE SEQUENCE [LARGE SCALE GENOMIC DNA]</scope>
</reference>
<proteinExistence type="inferred from homology"/>
<comment type="function">
    <text evidence="1">May help in the organization of the PsaE and PsaF subunits.</text>
</comment>
<comment type="subcellular location">
    <subcellularLocation>
        <location evidence="1">Plastid</location>
        <location evidence="1">Chloroplast thylakoid membrane</location>
        <topology evidence="1">Single-pass membrane protein</topology>
    </subcellularLocation>
</comment>
<comment type="similarity">
    <text evidence="1">Belongs to the PsaJ family.</text>
</comment>
<feature type="chain" id="PRO_0000207795" description="Photosystem I reaction center subunit IX">
    <location>
        <begin position="1"/>
        <end position="42"/>
    </location>
</feature>
<feature type="transmembrane region" description="Helical" evidence="1">
    <location>
        <begin position="7"/>
        <end position="27"/>
    </location>
</feature>